<reference key="1">
    <citation type="journal article" date="2006" name="Proc. Natl. Acad. Sci. U.S.A.">
        <title>Identification of genes subject to positive selection in uropathogenic strains of Escherichia coli: a comparative genomics approach.</title>
        <authorList>
            <person name="Chen S.L."/>
            <person name="Hung C.-S."/>
            <person name="Xu J."/>
            <person name="Reigstad C.S."/>
            <person name="Magrini V."/>
            <person name="Sabo A."/>
            <person name="Blasiar D."/>
            <person name="Bieri T."/>
            <person name="Meyer R.R."/>
            <person name="Ozersky P."/>
            <person name="Armstrong J.R."/>
            <person name="Fulton R.S."/>
            <person name="Latreille J.P."/>
            <person name="Spieth J."/>
            <person name="Hooton T.M."/>
            <person name="Mardis E.R."/>
            <person name="Hultgren S.J."/>
            <person name="Gordon J.I."/>
        </authorList>
    </citation>
    <scope>NUCLEOTIDE SEQUENCE [LARGE SCALE GENOMIC DNA]</scope>
    <source>
        <strain>UTI89 / UPEC</strain>
    </source>
</reference>
<feature type="chain" id="PRO_1000068762" description="Sulfite reductase [NADPH] hemoprotein beta-component">
    <location>
        <begin position="1"/>
        <end position="570"/>
    </location>
</feature>
<feature type="binding site" evidence="1">
    <location>
        <position position="434"/>
    </location>
    <ligand>
        <name>[4Fe-4S] cluster</name>
        <dbReference type="ChEBI" id="CHEBI:49883"/>
    </ligand>
</feature>
<feature type="binding site" evidence="1">
    <location>
        <position position="440"/>
    </location>
    <ligand>
        <name>[4Fe-4S] cluster</name>
        <dbReference type="ChEBI" id="CHEBI:49883"/>
    </ligand>
</feature>
<feature type="binding site" evidence="1">
    <location>
        <position position="479"/>
    </location>
    <ligand>
        <name>[4Fe-4S] cluster</name>
        <dbReference type="ChEBI" id="CHEBI:49883"/>
    </ligand>
</feature>
<feature type="binding site" evidence="1">
    <location>
        <position position="483"/>
    </location>
    <ligand>
        <name>[4Fe-4S] cluster</name>
        <dbReference type="ChEBI" id="CHEBI:49883"/>
    </ligand>
</feature>
<feature type="binding site" description="axial binding residue" evidence="1">
    <location>
        <position position="483"/>
    </location>
    <ligand>
        <name>siroheme</name>
        <dbReference type="ChEBI" id="CHEBI:60052"/>
    </ligand>
    <ligandPart>
        <name>Fe</name>
        <dbReference type="ChEBI" id="CHEBI:18248"/>
    </ligandPart>
</feature>
<protein>
    <recommendedName>
        <fullName evidence="1">Sulfite reductase [NADPH] hemoprotein beta-component</fullName>
        <shortName evidence="1">SiR-HP</shortName>
        <shortName evidence="1">SiRHP</shortName>
        <ecNumber evidence="1">1.8.1.2</ecNumber>
    </recommendedName>
</protein>
<dbReference type="EC" id="1.8.1.2" evidence="1"/>
<dbReference type="EMBL" id="CP000243">
    <property type="protein sequence ID" value="ABE08579.1"/>
    <property type="molecule type" value="Genomic_DNA"/>
</dbReference>
<dbReference type="RefSeq" id="WP_001290708.1">
    <property type="nucleotide sequence ID" value="NZ_CP064825.1"/>
</dbReference>
<dbReference type="SMR" id="Q1R7T5"/>
<dbReference type="KEGG" id="eci:UTI89_C3127"/>
<dbReference type="HOGENOM" id="CLU_001975_3_2_6"/>
<dbReference type="UniPathway" id="UPA00140">
    <property type="reaction ID" value="UER00207"/>
</dbReference>
<dbReference type="Proteomes" id="UP000001952">
    <property type="component" value="Chromosome"/>
</dbReference>
<dbReference type="GO" id="GO:0009337">
    <property type="term" value="C:sulfite reductase complex (NADPH)"/>
    <property type="evidence" value="ECO:0007669"/>
    <property type="project" value="InterPro"/>
</dbReference>
<dbReference type="GO" id="GO:0051539">
    <property type="term" value="F:4 iron, 4 sulfur cluster binding"/>
    <property type="evidence" value="ECO:0007669"/>
    <property type="project" value="UniProtKB-KW"/>
</dbReference>
<dbReference type="GO" id="GO:0020037">
    <property type="term" value="F:heme binding"/>
    <property type="evidence" value="ECO:0007669"/>
    <property type="project" value="InterPro"/>
</dbReference>
<dbReference type="GO" id="GO:0046872">
    <property type="term" value="F:metal ion binding"/>
    <property type="evidence" value="ECO:0007669"/>
    <property type="project" value="UniProtKB-KW"/>
</dbReference>
<dbReference type="GO" id="GO:0050661">
    <property type="term" value="F:NADP binding"/>
    <property type="evidence" value="ECO:0007669"/>
    <property type="project" value="InterPro"/>
</dbReference>
<dbReference type="GO" id="GO:0050311">
    <property type="term" value="F:sulfite reductase (ferredoxin) activity"/>
    <property type="evidence" value="ECO:0007669"/>
    <property type="project" value="TreeGrafter"/>
</dbReference>
<dbReference type="GO" id="GO:0004783">
    <property type="term" value="F:sulfite reductase (NADPH) activity"/>
    <property type="evidence" value="ECO:0007669"/>
    <property type="project" value="UniProtKB-UniRule"/>
</dbReference>
<dbReference type="GO" id="GO:0019344">
    <property type="term" value="P:cysteine biosynthetic process"/>
    <property type="evidence" value="ECO:0007669"/>
    <property type="project" value="UniProtKB-KW"/>
</dbReference>
<dbReference type="GO" id="GO:0070814">
    <property type="term" value="P:hydrogen sulfide biosynthetic process"/>
    <property type="evidence" value="ECO:0007669"/>
    <property type="project" value="UniProtKB-UniRule"/>
</dbReference>
<dbReference type="GO" id="GO:0000103">
    <property type="term" value="P:sulfate assimilation"/>
    <property type="evidence" value="ECO:0007669"/>
    <property type="project" value="UniProtKB-UniRule"/>
</dbReference>
<dbReference type="FunFam" id="3.30.413.10:FF:000003">
    <property type="entry name" value="Sulfite reductase [NADPH] hemoprotein beta-component"/>
    <property type="match status" value="1"/>
</dbReference>
<dbReference type="FunFam" id="3.30.413.10:FF:000004">
    <property type="entry name" value="Sulfite reductase [NADPH] hemoprotein beta-component"/>
    <property type="match status" value="1"/>
</dbReference>
<dbReference type="Gene3D" id="3.30.413.10">
    <property type="entry name" value="Sulfite Reductase Hemoprotein, domain 1"/>
    <property type="match status" value="2"/>
</dbReference>
<dbReference type="HAMAP" id="MF_01540">
    <property type="entry name" value="CysI"/>
    <property type="match status" value="1"/>
</dbReference>
<dbReference type="InterPro" id="IPR011786">
    <property type="entry name" value="CysI"/>
</dbReference>
<dbReference type="InterPro" id="IPR005117">
    <property type="entry name" value="NiRdtase/SiRdtase_haem-b_fer"/>
</dbReference>
<dbReference type="InterPro" id="IPR036136">
    <property type="entry name" value="Nit/Sulf_reduc_fer-like_dom_sf"/>
</dbReference>
<dbReference type="InterPro" id="IPR006067">
    <property type="entry name" value="NO2/SO3_Rdtase_4Fe4S_dom"/>
</dbReference>
<dbReference type="InterPro" id="IPR045169">
    <property type="entry name" value="NO2/SO3_Rdtase_4Fe4S_prot"/>
</dbReference>
<dbReference type="InterPro" id="IPR045854">
    <property type="entry name" value="NO2/SO3_Rdtase_4Fe4S_sf"/>
</dbReference>
<dbReference type="InterPro" id="IPR006066">
    <property type="entry name" value="NO2/SO3_Rdtase_FeS/sirohaem_BS"/>
</dbReference>
<dbReference type="NCBIfam" id="TIGR02041">
    <property type="entry name" value="CysI"/>
    <property type="match status" value="1"/>
</dbReference>
<dbReference type="NCBIfam" id="NF010029">
    <property type="entry name" value="PRK13504.1"/>
    <property type="match status" value="1"/>
</dbReference>
<dbReference type="PANTHER" id="PTHR11493:SF47">
    <property type="entry name" value="SULFITE REDUCTASE [NADPH] SUBUNIT BETA"/>
    <property type="match status" value="1"/>
</dbReference>
<dbReference type="PANTHER" id="PTHR11493">
    <property type="entry name" value="SULFITE REDUCTASE [NADPH] SUBUNIT BETA-RELATED"/>
    <property type="match status" value="1"/>
</dbReference>
<dbReference type="Pfam" id="PF01077">
    <property type="entry name" value="NIR_SIR"/>
    <property type="match status" value="1"/>
</dbReference>
<dbReference type="Pfam" id="PF03460">
    <property type="entry name" value="NIR_SIR_ferr"/>
    <property type="match status" value="2"/>
</dbReference>
<dbReference type="PRINTS" id="PR00397">
    <property type="entry name" value="SIROHAEM"/>
</dbReference>
<dbReference type="SUPFAM" id="SSF56014">
    <property type="entry name" value="Nitrite and sulphite reductase 4Fe-4S domain-like"/>
    <property type="match status" value="2"/>
</dbReference>
<dbReference type="SUPFAM" id="SSF55124">
    <property type="entry name" value="Nitrite/Sulfite reductase N-terminal domain-like"/>
    <property type="match status" value="2"/>
</dbReference>
<dbReference type="PROSITE" id="PS00365">
    <property type="entry name" value="NIR_SIR"/>
    <property type="match status" value="1"/>
</dbReference>
<sequence length="570" mass="63988">MSEKHPGPLVVEGKLTDAERMKLESNYLRGTIAEDLNDGLTGGFKGDNFLLIRFHGMYQQDDRDIRAERAEQKLEPRHAMLLRCRLPGGVITTKQWQAIDKFAGENTIYGSIRLTNRQTFQFHGILKKNVKPVHQMLHSVGLDALATANDMNRNVLCTSNPYESQLHAEAYEWAKKISEHLLPRTRAYAEIWLDQEKVATTDEEPILGQTYLPRKFKTTVVIPPQNDIDLHANDMNFVAIAENGKLVGFNLLVGGGLSIEHGNKKTYARTASEFGYLPLEHTLAVAEAVVTTQRDWGNRTDRKNAKTKYTLERVGVETFKAEVERRAGIKFEPIRPYEFTGRGDRIGWVKGIDDNWHLTLFIENGRILDYPGRPLKTGLLEIAKIHKGDFRITANQNLIIAGVPESEKAKIEKIAKESGLMNAVTPQRENSMACVSFPTCPLAMAEAERFLPSFIDNIDNLMAKHGVSDEHIVMRVTGCPNGCGRAMLAEVGLVGKAPGRYNLHLGGNRIGTRIPRMYKENITEPEILASLDELIGRWAKEREVGEGFGDFTVRAGIIRPVLDPARDLWD</sequence>
<accession>Q1R7T5</accession>
<evidence type="ECO:0000255" key="1">
    <source>
        <dbReference type="HAMAP-Rule" id="MF_01540"/>
    </source>
</evidence>
<keyword id="KW-0004">4Fe-4S</keyword>
<keyword id="KW-0028">Amino-acid biosynthesis</keyword>
<keyword id="KW-0198">Cysteine biosynthesis</keyword>
<keyword id="KW-0349">Heme</keyword>
<keyword id="KW-0408">Iron</keyword>
<keyword id="KW-0411">Iron-sulfur</keyword>
<keyword id="KW-0479">Metal-binding</keyword>
<keyword id="KW-0521">NADP</keyword>
<keyword id="KW-0560">Oxidoreductase</keyword>
<comment type="function">
    <text evidence="1">Component of the sulfite reductase complex that catalyzes the 6-electron reduction of sulfite to sulfide. This is one of several activities required for the biosynthesis of L-cysteine from sulfate.</text>
</comment>
<comment type="catalytic activity">
    <reaction evidence="1">
        <text>hydrogen sulfide + 3 NADP(+) + 3 H2O = sulfite + 3 NADPH + 4 H(+)</text>
        <dbReference type="Rhea" id="RHEA:13801"/>
        <dbReference type="ChEBI" id="CHEBI:15377"/>
        <dbReference type="ChEBI" id="CHEBI:15378"/>
        <dbReference type="ChEBI" id="CHEBI:17359"/>
        <dbReference type="ChEBI" id="CHEBI:29919"/>
        <dbReference type="ChEBI" id="CHEBI:57783"/>
        <dbReference type="ChEBI" id="CHEBI:58349"/>
        <dbReference type="EC" id="1.8.1.2"/>
    </reaction>
</comment>
<comment type="cofactor">
    <cofactor evidence="1">
        <name>siroheme</name>
        <dbReference type="ChEBI" id="CHEBI:60052"/>
    </cofactor>
    <text evidence="1">Binds 1 siroheme per subunit.</text>
</comment>
<comment type="cofactor">
    <cofactor evidence="1">
        <name>[4Fe-4S] cluster</name>
        <dbReference type="ChEBI" id="CHEBI:49883"/>
    </cofactor>
    <text evidence="1">Binds 1 [4Fe-4S] cluster per subunit.</text>
</comment>
<comment type="pathway">
    <text evidence="1">Sulfur metabolism; hydrogen sulfide biosynthesis; hydrogen sulfide from sulfite (NADPH route): step 1/1.</text>
</comment>
<comment type="subunit">
    <text evidence="1">Alpha(8)-beta(8). The alpha component is a flavoprotein, the beta component is a hemoprotein.</text>
</comment>
<comment type="similarity">
    <text evidence="1">Belongs to the nitrite and sulfite reductase 4Fe-4S domain family.</text>
</comment>
<gene>
    <name evidence="1" type="primary">cysI</name>
    <name type="ordered locus">UTI89_C3127</name>
</gene>
<organism>
    <name type="scientific">Escherichia coli (strain UTI89 / UPEC)</name>
    <dbReference type="NCBI Taxonomy" id="364106"/>
    <lineage>
        <taxon>Bacteria</taxon>
        <taxon>Pseudomonadati</taxon>
        <taxon>Pseudomonadota</taxon>
        <taxon>Gammaproteobacteria</taxon>
        <taxon>Enterobacterales</taxon>
        <taxon>Enterobacteriaceae</taxon>
        <taxon>Escherichia</taxon>
    </lineage>
</organism>
<proteinExistence type="inferred from homology"/>
<name>CYSI_ECOUT</name>